<proteinExistence type="inferred from homology"/>
<comment type="function">
    <text evidence="1">Probably plays an important role in intracellular peptide degradation.</text>
</comment>
<comment type="catalytic activity">
    <reaction evidence="1">
        <text>Release of an N-terminal amino acid, Xaa, from a peptide or arylamide. Xaa is preferably Glu or Asp but may be other amino acids, including Leu, Met, His, Cys and Gln.</text>
        <dbReference type="EC" id="3.4.11.23"/>
    </reaction>
</comment>
<comment type="cofactor">
    <cofactor evidence="1">
        <name>Mn(2+)</name>
        <dbReference type="ChEBI" id="CHEBI:29035"/>
    </cofactor>
    <text evidence="1">Binds 2 manganese ions per subunit.</text>
</comment>
<comment type="subunit">
    <text evidence="1">Homohexamer.</text>
</comment>
<comment type="subcellular location">
    <subcellularLocation>
        <location evidence="1">Cytoplasm</location>
    </subcellularLocation>
</comment>
<comment type="similarity">
    <text evidence="1">Belongs to the peptidase M17 family.</text>
</comment>
<reference key="1">
    <citation type="submission" date="2008-02" db="EMBL/GenBank/DDBJ databases">
        <title>Complete sequence of Escherichia coli C str. ATCC 8739.</title>
        <authorList>
            <person name="Copeland A."/>
            <person name="Lucas S."/>
            <person name="Lapidus A."/>
            <person name="Glavina del Rio T."/>
            <person name="Dalin E."/>
            <person name="Tice H."/>
            <person name="Bruce D."/>
            <person name="Goodwin L."/>
            <person name="Pitluck S."/>
            <person name="Kiss H."/>
            <person name="Brettin T."/>
            <person name="Detter J.C."/>
            <person name="Han C."/>
            <person name="Kuske C.R."/>
            <person name="Schmutz J."/>
            <person name="Larimer F."/>
            <person name="Land M."/>
            <person name="Hauser L."/>
            <person name="Kyrpides N."/>
            <person name="Mikhailova N."/>
            <person name="Ingram L."/>
            <person name="Richardson P."/>
        </authorList>
    </citation>
    <scope>NUCLEOTIDE SEQUENCE [LARGE SCALE GENOMIC DNA]</scope>
    <source>
        <strain>ATCC 8739 / DSM 1576 / NBRC 3972 / NCIMB 8545 / WDCM 00012 / Crooks</strain>
    </source>
</reference>
<gene>
    <name evidence="1" type="primary">pepB</name>
    <name type="ordered locus">EcolC_1154</name>
</gene>
<keyword id="KW-0031">Aminopeptidase</keyword>
<keyword id="KW-0963">Cytoplasm</keyword>
<keyword id="KW-0378">Hydrolase</keyword>
<keyword id="KW-0464">Manganese</keyword>
<keyword id="KW-0479">Metal-binding</keyword>
<keyword id="KW-0645">Protease</keyword>
<sequence>MTEAMKITLSTQPADARWGEKATYSINNDGITLHLNGADDLGLIQRAARKIDGLGIKHVQLSGEGWDADRCWAFWQGYKAPKGTRKVEWPDLDDAQRQELDNRLMIIDWVRDTINAPAEELGPSQLAQRAVDLISNVAGDRVTYRITKGEDLREQGYMGLHTVGRGSERSPVLLALDYNPTGDKEAPVYACLVGKGITFDSGGYSIKQTAFMDSMKSDMGGAATVTGALAFAITRGLNKRVKLFLCCADNLISGNAFKLGDIITYRNGKKVEVMNTDAEGRLVLADGLIDASAQKPEMIIDAATLTGAAKTALGNDYHALFSFDDALAGRLLASAAQENEPFWRLPLAEFHRSQLPSNFAELNNTGSAAYPAGASTAAGFLSHFVENYQQGWLHIDCSATYRKAPVEQWSAGATGLGVRTIANLLTA</sequence>
<accession>B1IWD8</accession>
<organism>
    <name type="scientific">Escherichia coli (strain ATCC 8739 / DSM 1576 / NBRC 3972 / NCIMB 8545 / WDCM 00012 / Crooks)</name>
    <dbReference type="NCBI Taxonomy" id="481805"/>
    <lineage>
        <taxon>Bacteria</taxon>
        <taxon>Pseudomonadati</taxon>
        <taxon>Pseudomonadota</taxon>
        <taxon>Gammaproteobacteria</taxon>
        <taxon>Enterobacterales</taxon>
        <taxon>Enterobacteriaceae</taxon>
        <taxon>Escherichia</taxon>
    </lineage>
</organism>
<evidence type="ECO:0000255" key="1">
    <source>
        <dbReference type="HAMAP-Rule" id="MF_00504"/>
    </source>
</evidence>
<dbReference type="EC" id="3.4.11.23" evidence="1"/>
<dbReference type="EMBL" id="CP000946">
    <property type="protein sequence ID" value="ACA76821.1"/>
    <property type="molecule type" value="Genomic_DNA"/>
</dbReference>
<dbReference type="RefSeq" id="WP_000133580.1">
    <property type="nucleotide sequence ID" value="NZ_MTFT01000002.1"/>
</dbReference>
<dbReference type="SMR" id="B1IWD8"/>
<dbReference type="MEROPS" id="M17.004"/>
<dbReference type="KEGG" id="ecl:EcolC_1154"/>
<dbReference type="HOGENOM" id="CLU_013734_7_1_6"/>
<dbReference type="GO" id="GO:0005737">
    <property type="term" value="C:cytoplasm"/>
    <property type="evidence" value="ECO:0007669"/>
    <property type="project" value="UniProtKB-SubCell"/>
</dbReference>
<dbReference type="GO" id="GO:0030145">
    <property type="term" value="F:manganese ion binding"/>
    <property type="evidence" value="ECO:0007669"/>
    <property type="project" value="UniProtKB-UniRule"/>
</dbReference>
<dbReference type="GO" id="GO:0070006">
    <property type="term" value="F:metalloaminopeptidase activity"/>
    <property type="evidence" value="ECO:0007669"/>
    <property type="project" value="InterPro"/>
</dbReference>
<dbReference type="GO" id="GO:0006508">
    <property type="term" value="P:proteolysis"/>
    <property type="evidence" value="ECO:0007669"/>
    <property type="project" value="UniProtKB-UniRule"/>
</dbReference>
<dbReference type="CDD" id="cd00433">
    <property type="entry name" value="Peptidase_M17"/>
    <property type="match status" value="1"/>
</dbReference>
<dbReference type="FunFam" id="3.40.630.10:FF:000037">
    <property type="entry name" value="Peptidase B"/>
    <property type="match status" value="1"/>
</dbReference>
<dbReference type="Gene3D" id="3.40.630.10">
    <property type="entry name" value="Zn peptidases"/>
    <property type="match status" value="1"/>
</dbReference>
<dbReference type="HAMAP" id="MF_00504">
    <property type="entry name" value="Aminopeptidase_M17"/>
    <property type="match status" value="1"/>
</dbReference>
<dbReference type="InterPro" id="IPR011356">
    <property type="entry name" value="Leucine_aapep/pepB"/>
</dbReference>
<dbReference type="InterPro" id="IPR047620">
    <property type="entry name" value="M17_PepB-like_N"/>
</dbReference>
<dbReference type="InterPro" id="IPR008330">
    <property type="entry name" value="Pept_M17_PepB"/>
</dbReference>
<dbReference type="InterPro" id="IPR000819">
    <property type="entry name" value="Peptidase_M17_C"/>
</dbReference>
<dbReference type="NCBIfam" id="NF003450">
    <property type="entry name" value="PRK05015.1"/>
    <property type="match status" value="1"/>
</dbReference>
<dbReference type="PANTHER" id="PTHR11963">
    <property type="entry name" value="LEUCINE AMINOPEPTIDASE-RELATED"/>
    <property type="match status" value="1"/>
</dbReference>
<dbReference type="PANTHER" id="PTHR11963:SF20">
    <property type="entry name" value="PEPTIDASE B"/>
    <property type="match status" value="1"/>
</dbReference>
<dbReference type="Pfam" id="PF12404">
    <property type="entry name" value="DUF3663"/>
    <property type="match status" value="1"/>
</dbReference>
<dbReference type="Pfam" id="PF00883">
    <property type="entry name" value="Peptidase_M17"/>
    <property type="match status" value="1"/>
</dbReference>
<dbReference type="PIRSF" id="PIRSF036388">
    <property type="entry name" value="Ctsl_amnpptdse_B"/>
    <property type="match status" value="1"/>
</dbReference>
<dbReference type="PRINTS" id="PR00481">
    <property type="entry name" value="LAMNOPPTDASE"/>
</dbReference>
<dbReference type="SUPFAM" id="SSF53187">
    <property type="entry name" value="Zn-dependent exopeptidases"/>
    <property type="match status" value="1"/>
</dbReference>
<dbReference type="PROSITE" id="PS00631">
    <property type="entry name" value="CYTOSOL_AP"/>
    <property type="match status" value="1"/>
</dbReference>
<feature type="chain" id="PRO_1000081509" description="Peptidase B">
    <location>
        <begin position="1"/>
        <end position="427"/>
    </location>
</feature>
<feature type="active site" evidence="1">
    <location>
        <position position="207"/>
    </location>
</feature>
<feature type="active site" evidence="1">
    <location>
        <position position="281"/>
    </location>
</feature>
<feature type="binding site" evidence="1">
    <location>
        <position position="195"/>
    </location>
    <ligand>
        <name>Mn(2+)</name>
        <dbReference type="ChEBI" id="CHEBI:29035"/>
        <label>2</label>
    </ligand>
</feature>
<feature type="binding site" evidence="1">
    <location>
        <position position="200"/>
    </location>
    <ligand>
        <name>Mn(2+)</name>
        <dbReference type="ChEBI" id="CHEBI:29035"/>
        <label>1</label>
    </ligand>
</feature>
<feature type="binding site" evidence="1">
    <location>
        <position position="200"/>
    </location>
    <ligand>
        <name>Mn(2+)</name>
        <dbReference type="ChEBI" id="CHEBI:29035"/>
        <label>2</label>
    </ligand>
</feature>
<feature type="binding site" evidence="1">
    <location>
        <position position="218"/>
    </location>
    <ligand>
        <name>Mn(2+)</name>
        <dbReference type="ChEBI" id="CHEBI:29035"/>
        <label>2</label>
    </ligand>
</feature>
<feature type="binding site" evidence="1">
    <location>
        <position position="277"/>
    </location>
    <ligand>
        <name>Mn(2+)</name>
        <dbReference type="ChEBI" id="CHEBI:29035"/>
        <label>1</label>
    </ligand>
</feature>
<feature type="binding site" evidence="1">
    <location>
        <position position="279"/>
    </location>
    <ligand>
        <name>Mn(2+)</name>
        <dbReference type="ChEBI" id="CHEBI:29035"/>
        <label>1</label>
    </ligand>
</feature>
<feature type="binding site" evidence="1">
    <location>
        <position position="279"/>
    </location>
    <ligand>
        <name>Mn(2+)</name>
        <dbReference type="ChEBI" id="CHEBI:29035"/>
        <label>2</label>
    </ligand>
</feature>
<protein>
    <recommendedName>
        <fullName evidence="1">Peptidase B</fullName>
        <ecNumber evidence="1">3.4.11.23</ecNumber>
    </recommendedName>
    <alternativeName>
        <fullName evidence="1">Aminopeptidase B</fullName>
    </alternativeName>
</protein>
<name>PEPB_ECOLC</name>